<sequence>MLKQVEIFTDGSCLGNPGPGGYGAILRYRGHEKTFSAGYTRTTNNRMELMAAIVALEALKEHCEVILSTDSQYVRQGITQWIHNWKKRGWKTADKKPVKNVDLWQRLDAALGQHQIKWEWVKGHAGHPENERCDELARAAAMNPTLEDTGYQVEV</sequence>
<feature type="chain" id="PRO_1000074642" description="Ribonuclease H">
    <location>
        <begin position="1"/>
        <end position="155"/>
    </location>
</feature>
<feature type="domain" description="RNase H type-1" evidence="2">
    <location>
        <begin position="1"/>
        <end position="142"/>
    </location>
</feature>
<feature type="binding site" evidence="1">
    <location>
        <position position="10"/>
    </location>
    <ligand>
        <name>Mg(2+)</name>
        <dbReference type="ChEBI" id="CHEBI:18420"/>
        <label>1</label>
    </ligand>
</feature>
<feature type="binding site" evidence="1">
    <location>
        <position position="10"/>
    </location>
    <ligand>
        <name>Mg(2+)</name>
        <dbReference type="ChEBI" id="CHEBI:18420"/>
        <label>2</label>
    </ligand>
</feature>
<feature type="binding site" evidence="1">
    <location>
        <position position="48"/>
    </location>
    <ligand>
        <name>Mg(2+)</name>
        <dbReference type="ChEBI" id="CHEBI:18420"/>
        <label>1</label>
    </ligand>
</feature>
<feature type="binding site" evidence="1">
    <location>
        <position position="70"/>
    </location>
    <ligand>
        <name>Mg(2+)</name>
        <dbReference type="ChEBI" id="CHEBI:18420"/>
        <label>1</label>
    </ligand>
</feature>
<feature type="binding site" evidence="1">
    <location>
        <position position="134"/>
    </location>
    <ligand>
        <name>Mg(2+)</name>
        <dbReference type="ChEBI" id="CHEBI:18420"/>
        <label>2</label>
    </ligand>
</feature>
<comment type="function">
    <text evidence="1">Endonuclease that specifically degrades the RNA of RNA-DNA hybrids.</text>
</comment>
<comment type="catalytic activity">
    <reaction evidence="1">
        <text>Endonucleolytic cleavage to 5'-phosphomonoester.</text>
        <dbReference type="EC" id="3.1.26.4"/>
    </reaction>
</comment>
<comment type="cofactor">
    <cofactor evidence="1">
        <name>Mg(2+)</name>
        <dbReference type="ChEBI" id="CHEBI:18420"/>
    </cofactor>
    <text evidence="1">Binds 1 Mg(2+) ion per subunit. May bind a second metal ion at a regulatory site, or after substrate binding.</text>
</comment>
<comment type="subunit">
    <text evidence="1">Monomer.</text>
</comment>
<comment type="subcellular location">
    <subcellularLocation>
        <location evidence="1">Cytoplasm</location>
    </subcellularLocation>
</comment>
<comment type="similarity">
    <text evidence="1">Belongs to the RNase H family.</text>
</comment>
<evidence type="ECO:0000255" key="1">
    <source>
        <dbReference type="HAMAP-Rule" id="MF_00042"/>
    </source>
</evidence>
<evidence type="ECO:0000255" key="2">
    <source>
        <dbReference type="PROSITE-ProRule" id="PRU00408"/>
    </source>
</evidence>
<reference key="1">
    <citation type="journal article" date="2006" name="Mol. Microbiol.">
        <title>Role of pathogenicity island-associated integrases in the genome plasticity of uropathogenic Escherichia coli strain 536.</title>
        <authorList>
            <person name="Hochhut B."/>
            <person name="Wilde C."/>
            <person name="Balling G."/>
            <person name="Middendorf B."/>
            <person name="Dobrindt U."/>
            <person name="Brzuszkiewicz E."/>
            <person name="Gottschalk G."/>
            <person name="Carniel E."/>
            <person name="Hacker J."/>
        </authorList>
    </citation>
    <scope>NUCLEOTIDE SEQUENCE [LARGE SCALE GENOMIC DNA]</scope>
    <source>
        <strain>536 / UPEC</strain>
    </source>
</reference>
<name>RNH_ECOL5</name>
<proteinExistence type="inferred from homology"/>
<organism>
    <name type="scientific">Escherichia coli O6:K15:H31 (strain 536 / UPEC)</name>
    <dbReference type="NCBI Taxonomy" id="362663"/>
    <lineage>
        <taxon>Bacteria</taxon>
        <taxon>Pseudomonadati</taxon>
        <taxon>Pseudomonadota</taxon>
        <taxon>Gammaproteobacteria</taxon>
        <taxon>Enterobacterales</taxon>
        <taxon>Enterobacteriaceae</taxon>
        <taxon>Escherichia</taxon>
    </lineage>
</organism>
<gene>
    <name evidence="1" type="primary">rnhA</name>
    <name type="ordered locus">ECP_0220</name>
</gene>
<protein>
    <recommendedName>
        <fullName evidence="1">Ribonuclease H</fullName>
        <shortName evidence="1">RNase H</shortName>
        <ecNumber evidence="1">3.1.26.4</ecNumber>
    </recommendedName>
</protein>
<dbReference type="EC" id="3.1.26.4" evidence="1"/>
<dbReference type="EMBL" id="CP000247">
    <property type="protein sequence ID" value="ABG68258.1"/>
    <property type="molecule type" value="Genomic_DNA"/>
</dbReference>
<dbReference type="RefSeq" id="WP_000917867.1">
    <property type="nucleotide sequence ID" value="NC_008253.1"/>
</dbReference>
<dbReference type="SMR" id="Q0TLC3"/>
<dbReference type="KEGG" id="ecp:ECP_0220"/>
<dbReference type="HOGENOM" id="CLU_030894_6_0_6"/>
<dbReference type="Proteomes" id="UP000009182">
    <property type="component" value="Chromosome"/>
</dbReference>
<dbReference type="GO" id="GO:0005737">
    <property type="term" value="C:cytoplasm"/>
    <property type="evidence" value="ECO:0007669"/>
    <property type="project" value="UniProtKB-SubCell"/>
</dbReference>
<dbReference type="GO" id="GO:0000287">
    <property type="term" value="F:magnesium ion binding"/>
    <property type="evidence" value="ECO:0007669"/>
    <property type="project" value="UniProtKB-UniRule"/>
</dbReference>
<dbReference type="GO" id="GO:0003676">
    <property type="term" value="F:nucleic acid binding"/>
    <property type="evidence" value="ECO:0007669"/>
    <property type="project" value="InterPro"/>
</dbReference>
<dbReference type="GO" id="GO:0004523">
    <property type="term" value="F:RNA-DNA hybrid ribonuclease activity"/>
    <property type="evidence" value="ECO:0007669"/>
    <property type="project" value="UniProtKB-UniRule"/>
</dbReference>
<dbReference type="GO" id="GO:0043137">
    <property type="term" value="P:DNA replication, removal of RNA primer"/>
    <property type="evidence" value="ECO:0007669"/>
    <property type="project" value="TreeGrafter"/>
</dbReference>
<dbReference type="CDD" id="cd09278">
    <property type="entry name" value="RNase_HI_prokaryote_like"/>
    <property type="match status" value="1"/>
</dbReference>
<dbReference type="FunFam" id="3.30.420.10:FF:000008">
    <property type="entry name" value="Ribonuclease H"/>
    <property type="match status" value="1"/>
</dbReference>
<dbReference type="Gene3D" id="3.30.420.10">
    <property type="entry name" value="Ribonuclease H-like superfamily/Ribonuclease H"/>
    <property type="match status" value="1"/>
</dbReference>
<dbReference type="HAMAP" id="MF_00042">
    <property type="entry name" value="RNase_H"/>
    <property type="match status" value="1"/>
</dbReference>
<dbReference type="InterPro" id="IPR050092">
    <property type="entry name" value="RNase_H"/>
</dbReference>
<dbReference type="InterPro" id="IPR012337">
    <property type="entry name" value="RNaseH-like_sf"/>
</dbReference>
<dbReference type="InterPro" id="IPR002156">
    <property type="entry name" value="RNaseH_domain"/>
</dbReference>
<dbReference type="InterPro" id="IPR036397">
    <property type="entry name" value="RNaseH_sf"/>
</dbReference>
<dbReference type="InterPro" id="IPR022892">
    <property type="entry name" value="RNaseHI"/>
</dbReference>
<dbReference type="NCBIfam" id="NF001236">
    <property type="entry name" value="PRK00203.1"/>
    <property type="match status" value="1"/>
</dbReference>
<dbReference type="PANTHER" id="PTHR10642">
    <property type="entry name" value="RIBONUCLEASE H1"/>
    <property type="match status" value="1"/>
</dbReference>
<dbReference type="PANTHER" id="PTHR10642:SF26">
    <property type="entry name" value="RIBONUCLEASE H1"/>
    <property type="match status" value="1"/>
</dbReference>
<dbReference type="Pfam" id="PF00075">
    <property type="entry name" value="RNase_H"/>
    <property type="match status" value="1"/>
</dbReference>
<dbReference type="SUPFAM" id="SSF53098">
    <property type="entry name" value="Ribonuclease H-like"/>
    <property type="match status" value="1"/>
</dbReference>
<dbReference type="PROSITE" id="PS50879">
    <property type="entry name" value="RNASE_H_1"/>
    <property type="match status" value="1"/>
</dbReference>
<keyword id="KW-0963">Cytoplasm</keyword>
<keyword id="KW-0255">Endonuclease</keyword>
<keyword id="KW-0378">Hydrolase</keyword>
<keyword id="KW-0460">Magnesium</keyword>
<keyword id="KW-0479">Metal-binding</keyword>
<keyword id="KW-0540">Nuclease</keyword>
<accession>Q0TLC3</accession>